<evidence type="ECO:0000255" key="1">
    <source>
        <dbReference type="HAMAP-Rule" id="MF_00451"/>
    </source>
</evidence>
<protein>
    <recommendedName>
        <fullName evidence="1">Nucleoside diphosphate kinase</fullName>
        <shortName evidence="1">NDK</shortName>
        <shortName evidence="1">NDP kinase</shortName>
        <ecNumber evidence="1">2.7.4.6</ecNumber>
    </recommendedName>
    <alternativeName>
        <fullName evidence="1">Nucleoside-2-P kinase</fullName>
    </alternativeName>
</protein>
<keyword id="KW-0067">ATP-binding</keyword>
<keyword id="KW-0963">Cytoplasm</keyword>
<keyword id="KW-0418">Kinase</keyword>
<keyword id="KW-0460">Magnesium</keyword>
<keyword id="KW-0479">Metal-binding</keyword>
<keyword id="KW-0546">Nucleotide metabolism</keyword>
<keyword id="KW-0547">Nucleotide-binding</keyword>
<keyword id="KW-0597">Phosphoprotein</keyword>
<keyword id="KW-1185">Reference proteome</keyword>
<keyword id="KW-0808">Transferase</keyword>
<feature type="chain" id="PRO_0000267798" description="Nucleoside diphosphate kinase">
    <location>
        <begin position="1"/>
        <end position="140"/>
    </location>
</feature>
<feature type="active site" description="Pros-phosphohistidine intermediate" evidence="1">
    <location>
        <position position="117"/>
    </location>
</feature>
<feature type="binding site" evidence="1">
    <location>
        <position position="11"/>
    </location>
    <ligand>
        <name>ATP</name>
        <dbReference type="ChEBI" id="CHEBI:30616"/>
    </ligand>
</feature>
<feature type="binding site" evidence="1">
    <location>
        <position position="59"/>
    </location>
    <ligand>
        <name>ATP</name>
        <dbReference type="ChEBI" id="CHEBI:30616"/>
    </ligand>
</feature>
<feature type="binding site" evidence="1">
    <location>
        <position position="87"/>
    </location>
    <ligand>
        <name>ATP</name>
        <dbReference type="ChEBI" id="CHEBI:30616"/>
    </ligand>
</feature>
<feature type="binding site" evidence="1">
    <location>
        <position position="93"/>
    </location>
    <ligand>
        <name>ATP</name>
        <dbReference type="ChEBI" id="CHEBI:30616"/>
    </ligand>
</feature>
<feature type="binding site" evidence="1">
    <location>
        <position position="104"/>
    </location>
    <ligand>
        <name>ATP</name>
        <dbReference type="ChEBI" id="CHEBI:30616"/>
    </ligand>
</feature>
<feature type="binding site" evidence="1">
    <location>
        <position position="114"/>
    </location>
    <ligand>
        <name>ATP</name>
        <dbReference type="ChEBI" id="CHEBI:30616"/>
    </ligand>
</feature>
<proteinExistence type="inferred from homology"/>
<gene>
    <name evidence="1" type="primary">ndk</name>
    <name type="ordered locus">RD1_3111</name>
</gene>
<name>NDK_ROSDO</name>
<dbReference type="EC" id="2.7.4.6" evidence="1"/>
<dbReference type="EMBL" id="CP000362">
    <property type="protein sequence ID" value="ABG32620.1"/>
    <property type="molecule type" value="Genomic_DNA"/>
</dbReference>
<dbReference type="RefSeq" id="WP_011569236.1">
    <property type="nucleotide sequence ID" value="NC_008209.1"/>
</dbReference>
<dbReference type="SMR" id="Q164H3"/>
<dbReference type="STRING" id="375451.RD1_3111"/>
<dbReference type="KEGG" id="rde:RD1_3111"/>
<dbReference type="eggNOG" id="COG0105">
    <property type="taxonomic scope" value="Bacteria"/>
</dbReference>
<dbReference type="HOGENOM" id="CLU_060216_8_1_5"/>
<dbReference type="OrthoDB" id="9801161at2"/>
<dbReference type="Proteomes" id="UP000007029">
    <property type="component" value="Chromosome"/>
</dbReference>
<dbReference type="GO" id="GO:0005737">
    <property type="term" value="C:cytoplasm"/>
    <property type="evidence" value="ECO:0007669"/>
    <property type="project" value="UniProtKB-SubCell"/>
</dbReference>
<dbReference type="GO" id="GO:0005524">
    <property type="term" value="F:ATP binding"/>
    <property type="evidence" value="ECO:0007669"/>
    <property type="project" value="UniProtKB-UniRule"/>
</dbReference>
<dbReference type="GO" id="GO:0046872">
    <property type="term" value="F:metal ion binding"/>
    <property type="evidence" value="ECO:0007669"/>
    <property type="project" value="UniProtKB-KW"/>
</dbReference>
<dbReference type="GO" id="GO:0004550">
    <property type="term" value="F:nucleoside diphosphate kinase activity"/>
    <property type="evidence" value="ECO:0007669"/>
    <property type="project" value="UniProtKB-UniRule"/>
</dbReference>
<dbReference type="GO" id="GO:0006241">
    <property type="term" value="P:CTP biosynthetic process"/>
    <property type="evidence" value="ECO:0007669"/>
    <property type="project" value="UniProtKB-UniRule"/>
</dbReference>
<dbReference type="GO" id="GO:0006183">
    <property type="term" value="P:GTP biosynthetic process"/>
    <property type="evidence" value="ECO:0007669"/>
    <property type="project" value="UniProtKB-UniRule"/>
</dbReference>
<dbReference type="GO" id="GO:0006228">
    <property type="term" value="P:UTP biosynthetic process"/>
    <property type="evidence" value="ECO:0007669"/>
    <property type="project" value="UniProtKB-UniRule"/>
</dbReference>
<dbReference type="CDD" id="cd04413">
    <property type="entry name" value="NDPk_I"/>
    <property type="match status" value="1"/>
</dbReference>
<dbReference type="FunFam" id="3.30.70.141:FF:000001">
    <property type="entry name" value="Nucleoside diphosphate kinase"/>
    <property type="match status" value="1"/>
</dbReference>
<dbReference type="Gene3D" id="3.30.70.141">
    <property type="entry name" value="Nucleoside diphosphate kinase-like domain"/>
    <property type="match status" value="1"/>
</dbReference>
<dbReference type="HAMAP" id="MF_00451">
    <property type="entry name" value="NDP_kinase"/>
    <property type="match status" value="1"/>
</dbReference>
<dbReference type="InterPro" id="IPR034907">
    <property type="entry name" value="NDK-like_dom"/>
</dbReference>
<dbReference type="InterPro" id="IPR036850">
    <property type="entry name" value="NDK-like_dom_sf"/>
</dbReference>
<dbReference type="InterPro" id="IPR001564">
    <property type="entry name" value="Nucleoside_diP_kinase"/>
</dbReference>
<dbReference type="InterPro" id="IPR023005">
    <property type="entry name" value="Nucleoside_diP_kinase_AS"/>
</dbReference>
<dbReference type="NCBIfam" id="NF001908">
    <property type="entry name" value="PRK00668.1"/>
    <property type="match status" value="1"/>
</dbReference>
<dbReference type="PANTHER" id="PTHR46161">
    <property type="entry name" value="NUCLEOSIDE DIPHOSPHATE KINASE"/>
    <property type="match status" value="1"/>
</dbReference>
<dbReference type="PANTHER" id="PTHR46161:SF3">
    <property type="entry name" value="NUCLEOSIDE DIPHOSPHATE KINASE DDB_G0292928-RELATED"/>
    <property type="match status" value="1"/>
</dbReference>
<dbReference type="Pfam" id="PF00334">
    <property type="entry name" value="NDK"/>
    <property type="match status" value="1"/>
</dbReference>
<dbReference type="PRINTS" id="PR01243">
    <property type="entry name" value="NUCDPKINASE"/>
</dbReference>
<dbReference type="SMART" id="SM00562">
    <property type="entry name" value="NDK"/>
    <property type="match status" value="1"/>
</dbReference>
<dbReference type="SUPFAM" id="SSF54919">
    <property type="entry name" value="Nucleoside diphosphate kinase, NDK"/>
    <property type="match status" value="1"/>
</dbReference>
<dbReference type="PROSITE" id="PS00469">
    <property type="entry name" value="NDPK"/>
    <property type="match status" value="1"/>
</dbReference>
<dbReference type="PROSITE" id="PS51374">
    <property type="entry name" value="NDPK_LIKE"/>
    <property type="match status" value="1"/>
</dbReference>
<sequence>MALERTFSIIKPDATRRNLTGKINAKFEEAGLRIVAQKRIHMTKAQAGVFYAVHAERPFYDELCEFMASAPVVVQVLEGEGAIAKNREVMGATNPADAAPGTIRAEFAESVGENSVHGSDAPETAAEEIAYFFSGMELVG</sequence>
<reference key="1">
    <citation type="journal article" date="2007" name="J. Bacteriol.">
        <title>The complete genome sequence of Roseobacter denitrificans reveals a mixotrophic rather than photosynthetic metabolism.</title>
        <authorList>
            <person name="Swingley W.D."/>
            <person name="Sadekar S."/>
            <person name="Mastrian S.D."/>
            <person name="Matthies H.J."/>
            <person name="Hao J."/>
            <person name="Ramos H."/>
            <person name="Acharya C.R."/>
            <person name="Conrad A.L."/>
            <person name="Taylor H.L."/>
            <person name="Dejesa L.C."/>
            <person name="Shah M.K."/>
            <person name="O'Huallachain M.E."/>
            <person name="Lince M.T."/>
            <person name="Blankenship R.E."/>
            <person name="Beatty J.T."/>
            <person name="Touchman J.W."/>
        </authorList>
    </citation>
    <scope>NUCLEOTIDE SEQUENCE [LARGE SCALE GENOMIC DNA]</scope>
    <source>
        <strain>ATCC 33942 / OCh 114</strain>
    </source>
</reference>
<accession>Q164H3</accession>
<organism>
    <name type="scientific">Roseobacter denitrificans (strain ATCC 33942 / OCh 114)</name>
    <name type="common">Erythrobacter sp. (strain OCh 114)</name>
    <name type="synonym">Roseobacter denitrificans</name>
    <dbReference type="NCBI Taxonomy" id="375451"/>
    <lineage>
        <taxon>Bacteria</taxon>
        <taxon>Pseudomonadati</taxon>
        <taxon>Pseudomonadota</taxon>
        <taxon>Alphaproteobacteria</taxon>
        <taxon>Rhodobacterales</taxon>
        <taxon>Roseobacteraceae</taxon>
        <taxon>Roseobacter</taxon>
    </lineage>
</organism>
<comment type="function">
    <text evidence="1">Major role in the synthesis of nucleoside triphosphates other than ATP. The ATP gamma phosphate is transferred to the NDP beta phosphate via a ping-pong mechanism, using a phosphorylated active-site intermediate.</text>
</comment>
<comment type="catalytic activity">
    <reaction evidence="1">
        <text>a 2'-deoxyribonucleoside 5'-diphosphate + ATP = a 2'-deoxyribonucleoside 5'-triphosphate + ADP</text>
        <dbReference type="Rhea" id="RHEA:44640"/>
        <dbReference type="ChEBI" id="CHEBI:30616"/>
        <dbReference type="ChEBI" id="CHEBI:61560"/>
        <dbReference type="ChEBI" id="CHEBI:73316"/>
        <dbReference type="ChEBI" id="CHEBI:456216"/>
        <dbReference type="EC" id="2.7.4.6"/>
    </reaction>
</comment>
<comment type="catalytic activity">
    <reaction evidence="1">
        <text>a ribonucleoside 5'-diphosphate + ATP = a ribonucleoside 5'-triphosphate + ADP</text>
        <dbReference type="Rhea" id="RHEA:18113"/>
        <dbReference type="ChEBI" id="CHEBI:30616"/>
        <dbReference type="ChEBI" id="CHEBI:57930"/>
        <dbReference type="ChEBI" id="CHEBI:61557"/>
        <dbReference type="ChEBI" id="CHEBI:456216"/>
        <dbReference type="EC" id="2.7.4.6"/>
    </reaction>
</comment>
<comment type="cofactor">
    <cofactor evidence="1">
        <name>Mg(2+)</name>
        <dbReference type="ChEBI" id="CHEBI:18420"/>
    </cofactor>
</comment>
<comment type="subunit">
    <text evidence="1">Homotetramer.</text>
</comment>
<comment type="subcellular location">
    <subcellularLocation>
        <location evidence="1">Cytoplasm</location>
    </subcellularLocation>
</comment>
<comment type="similarity">
    <text evidence="1">Belongs to the NDK family.</text>
</comment>